<reference key="1">
    <citation type="journal article" date="2009" name="PLoS Genet.">
        <title>Adaptations to submarine hydrothermal environments exemplified by the genome of Nautilia profundicola.</title>
        <authorList>
            <person name="Campbell B.J."/>
            <person name="Smith J.L."/>
            <person name="Hanson T.E."/>
            <person name="Klotz M.G."/>
            <person name="Stein L.Y."/>
            <person name="Lee C.K."/>
            <person name="Wu D."/>
            <person name="Robinson J.M."/>
            <person name="Khouri H.M."/>
            <person name="Eisen J.A."/>
            <person name="Cary S.C."/>
        </authorList>
    </citation>
    <scope>NUCLEOTIDE SEQUENCE [LARGE SCALE GENOMIC DNA]</scope>
    <source>
        <strain>ATCC BAA-1463 / DSM 18972 / AmH</strain>
    </source>
</reference>
<name>EX7L_NAUPA</name>
<organism>
    <name type="scientific">Nautilia profundicola (strain ATCC BAA-1463 / DSM 18972 / AmH)</name>
    <dbReference type="NCBI Taxonomy" id="598659"/>
    <lineage>
        <taxon>Bacteria</taxon>
        <taxon>Pseudomonadati</taxon>
        <taxon>Campylobacterota</taxon>
        <taxon>Epsilonproteobacteria</taxon>
        <taxon>Nautiliales</taxon>
        <taxon>Nautiliaceae</taxon>
        <taxon>Nautilia</taxon>
    </lineage>
</organism>
<keyword id="KW-0963">Cytoplasm</keyword>
<keyword id="KW-0269">Exonuclease</keyword>
<keyword id="KW-0378">Hydrolase</keyword>
<keyword id="KW-0540">Nuclease</keyword>
<gene>
    <name evidence="1" type="primary">xseA</name>
    <name type="ordered locus">NAMH_1360</name>
</gene>
<proteinExistence type="inferred from homology"/>
<sequence>MTPISVTQLNNQIKSIVESHFEIVLVEGEISKVVYHSSGHLYFTLKDENSSINCAMWKSNLTRMKFRLKEGEKVYVYGALSVYVPRGEYKIIAQSIEPSGVGALQKAFEQLKEELSKLGYFDEARKKSIPRFPRRIAIVTSATGAALQDMLRVAGKRWQLTEIYLFNALVQGDGAAEDIAMKIKLADEFVFEDGSGFDLIIIGRGGGSKEDLWPFNERVVADAVYNASTPIISAVGHEIDYLISDFVADVRAATPSNAMEIALPDKNEILLMLDEMKNAFVYKISHLIQKKERELIHIRELLNASSPVKKLDMKLQECELLLKRFNHSYINQIQKKEKELNELKNILFSLSPVIKINSFEKEIELLKSTFKNKTAQIISSKEKELINLKSAYETLNPKKREKKGFAEITKNGKRIDLKELKIGDIFDVSNADVLIKSKALEKIEN</sequence>
<dbReference type="EC" id="3.1.11.6" evidence="1"/>
<dbReference type="EMBL" id="CP001279">
    <property type="protein sequence ID" value="ACM93262.1"/>
    <property type="molecule type" value="Genomic_DNA"/>
</dbReference>
<dbReference type="RefSeq" id="WP_015902314.1">
    <property type="nucleotide sequence ID" value="NC_012115.1"/>
</dbReference>
<dbReference type="SMR" id="B9L5W5"/>
<dbReference type="STRING" id="598659.NAMH_1360"/>
<dbReference type="KEGG" id="nam:NAMH_1360"/>
<dbReference type="eggNOG" id="COG1570">
    <property type="taxonomic scope" value="Bacteria"/>
</dbReference>
<dbReference type="HOGENOM" id="CLU_023625_2_0_7"/>
<dbReference type="OrthoDB" id="9802795at2"/>
<dbReference type="Proteomes" id="UP000000448">
    <property type="component" value="Chromosome"/>
</dbReference>
<dbReference type="GO" id="GO:0005737">
    <property type="term" value="C:cytoplasm"/>
    <property type="evidence" value="ECO:0007669"/>
    <property type="project" value="UniProtKB-SubCell"/>
</dbReference>
<dbReference type="GO" id="GO:0009318">
    <property type="term" value="C:exodeoxyribonuclease VII complex"/>
    <property type="evidence" value="ECO:0007669"/>
    <property type="project" value="InterPro"/>
</dbReference>
<dbReference type="GO" id="GO:0008855">
    <property type="term" value="F:exodeoxyribonuclease VII activity"/>
    <property type="evidence" value="ECO:0007669"/>
    <property type="project" value="UniProtKB-UniRule"/>
</dbReference>
<dbReference type="GO" id="GO:0003676">
    <property type="term" value="F:nucleic acid binding"/>
    <property type="evidence" value="ECO:0007669"/>
    <property type="project" value="InterPro"/>
</dbReference>
<dbReference type="GO" id="GO:0006308">
    <property type="term" value="P:DNA catabolic process"/>
    <property type="evidence" value="ECO:0007669"/>
    <property type="project" value="UniProtKB-UniRule"/>
</dbReference>
<dbReference type="CDD" id="cd04489">
    <property type="entry name" value="ExoVII_LU_OBF"/>
    <property type="match status" value="1"/>
</dbReference>
<dbReference type="Gene3D" id="2.40.50.1010">
    <property type="match status" value="1"/>
</dbReference>
<dbReference type="HAMAP" id="MF_00378">
    <property type="entry name" value="Exonuc_7_L"/>
    <property type="match status" value="1"/>
</dbReference>
<dbReference type="InterPro" id="IPR003753">
    <property type="entry name" value="Exonuc_VII_L"/>
</dbReference>
<dbReference type="InterPro" id="IPR020579">
    <property type="entry name" value="Exonuc_VII_lsu_C"/>
</dbReference>
<dbReference type="InterPro" id="IPR025824">
    <property type="entry name" value="OB-fold_nuc-bd_dom"/>
</dbReference>
<dbReference type="NCBIfam" id="TIGR00237">
    <property type="entry name" value="xseA"/>
    <property type="match status" value="1"/>
</dbReference>
<dbReference type="PANTHER" id="PTHR30008">
    <property type="entry name" value="EXODEOXYRIBONUCLEASE 7 LARGE SUBUNIT"/>
    <property type="match status" value="1"/>
</dbReference>
<dbReference type="PANTHER" id="PTHR30008:SF0">
    <property type="entry name" value="EXODEOXYRIBONUCLEASE 7 LARGE SUBUNIT"/>
    <property type="match status" value="1"/>
</dbReference>
<dbReference type="Pfam" id="PF02601">
    <property type="entry name" value="Exonuc_VII_L"/>
    <property type="match status" value="1"/>
</dbReference>
<dbReference type="Pfam" id="PF13742">
    <property type="entry name" value="tRNA_anti_2"/>
    <property type="match status" value="1"/>
</dbReference>
<feature type="chain" id="PRO_1000200675" description="Exodeoxyribonuclease 7 large subunit">
    <location>
        <begin position="1"/>
        <end position="445"/>
    </location>
</feature>
<protein>
    <recommendedName>
        <fullName evidence="1">Exodeoxyribonuclease 7 large subunit</fullName>
        <ecNumber evidence="1">3.1.11.6</ecNumber>
    </recommendedName>
    <alternativeName>
        <fullName evidence="1">Exodeoxyribonuclease VII large subunit</fullName>
        <shortName evidence="1">Exonuclease VII large subunit</shortName>
    </alternativeName>
</protein>
<comment type="function">
    <text evidence="1">Bidirectionally degrades single-stranded DNA into large acid-insoluble oligonucleotides, which are then degraded further into small acid-soluble oligonucleotides.</text>
</comment>
<comment type="catalytic activity">
    <reaction evidence="1">
        <text>Exonucleolytic cleavage in either 5'- to 3'- or 3'- to 5'-direction to yield nucleoside 5'-phosphates.</text>
        <dbReference type="EC" id="3.1.11.6"/>
    </reaction>
</comment>
<comment type="subunit">
    <text evidence="1">Heterooligomer composed of large and small subunits.</text>
</comment>
<comment type="subcellular location">
    <subcellularLocation>
        <location evidence="1">Cytoplasm</location>
    </subcellularLocation>
</comment>
<comment type="similarity">
    <text evidence="1">Belongs to the XseA family.</text>
</comment>
<accession>B9L5W5</accession>
<evidence type="ECO:0000255" key="1">
    <source>
        <dbReference type="HAMAP-Rule" id="MF_00378"/>
    </source>
</evidence>